<feature type="chain" id="PRO_0000357777" description="NADH-quinone oxidoreductase subunit D">
    <location>
        <begin position="1"/>
        <end position="418"/>
    </location>
</feature>
<comment type="function">
    <text evidence="1">NDH-1 shuttles electrons from NADH, via FMN and iron-sulfur (Fe-S) centers, to quinones in the respiratory chain. The immediate electron acceptor for the enzyme in this species is believed to be ubiquinone. Couples the redox reaction to proton translocation (for every two electrons transferred, four hydrogen ions are translocated across the cytoplasmic membrane), and thus conserves the redox energy in a proton gradient.</text>
</comment>
<comment type="catalytic activity">
    <reaction evidence="1">
        <text>a quinone + NADH + 5 H(+)(in) = a quinol + NAD(+) + 4 H(+)(out)</text>
        <dbReference type="Rhea" id="RHEA:57888"/>
        <dbReference type="ChEBI" id="CHEBI:15378"/>
        <dbReference type="ChEBI" id="CHEBI:24646"/>
        <dbReference type="ChEBI" id="CHEBI:57540"/>
        <dbReference type="ChEBI" id="CHEBI:57945"/>
        <dbReference type="ChEBI" id="CHEBI:132124"/>
    </reaction>
</comment>
<comment type="subunit">
    <text evidence="1">NDH-1 is composed of 14 different subunits. Subunits NuoB, C, D, E, F, and G constitute the peripheral sector of the complex.</text>
</comment>
<comment type="subcellular location">
    <subcellularLocation>
        <location evidence="1">Cell inner membrane</location>
        <topology evidence="1">Peripheral membrane protein</topology>
        <orientation evidence="1">Cytoplasmic side</orientation>
    </subcellularLocation>
</comment>
<comment type="similarity">
    <text evidence="1">Belongs to the complex I 49 kDa subunit family.</text>
</comment>
<name>NUOD_BORA1</name>
<keyword id="KW-0997">Cell inner membrane</keyword>
<keyword id="KW-1003">Cell membrane</keyword>
<keyword id="KW-0472">Membrane</keyword>
<keyword id="KW-0520">NAD</keyword>
<keyword id="KW-0874">Quinone</keyword>
<keyword id="KW-1185">Reference proteome</keyword>
<keyword id="KW-1278">Translocase</keyword>
<keyword id="KW-0813">Transport</keyword>
<keyword id="KW-0830">Ubiquinone</keyword>
<evidence type="ECO:0000255" key="1">
    <source>
        <dbReference type="HAMAP-Rule" id="MF_01358"/>
    </source>
</evidence>
<protein>
    <recommendedName>
        <fullName evidence="1">NADH-quinone oxidoreductase subunit D</fullName>
        <ecNumber evidence="1">7.1.1.-</ecNumber>
    </recommendedName>
    <alternativeName>
        <fullName evidence="1">NADH dehydrogenase I subunit D</fullName>
    </alternativeName>
    <alternativeName>
        <fullName evidence="1">NDH-1 subunit D</fullName>
    </alternativeName>
</protein>
<accession>Q2KV09</accession>
<sequence length="418" mass="47576">MAEIKNYTLNFGPQHPAAHGVLRLVLELDGEVIQRADPHIGLLHRGTEKLAEHKTFIQALPYMDRLDYVSMMCNEHAYVMAIEKMLGVEAPLRAQYIRVMFDEITRILNHLMSLGSHALDVGAMAVFLYAFREREDLMDCYEAVSGARMHAAYYRPGGVYRDLPDTMAQYGETSKYRSDKELRAMNDARSGSLLDFIEDFTNRFPACVDEYETLLTDNRIWKQRLVGIGVVDPDRAKALGFTGPMLRGSGVAWDLRKTQPYEVYDLMDFDVPVGVNGDCYDRYLVRVAELRESNRIIRQCVEWLRNNPGPVMIENHKIAPPKREAMKSNMEELIHHFKLFTEGFHVPPGEAYAAVEHPKGEFGIYLVSDGANKPYRLKIRAPGFAHLQSLDEMSRGHMIADAVTIIGTQDIVFGEIDR</sequence>
<dbReference type="EC" id="7.1.1.-" evidence="1"/>
<dbReference type="EMBL" id="AM167904">
    <property type="protein sequence ID" value="CAJ48654.1"/>
    <property type="molecule type" value="Genomic_DNA"/>
</dbReference>
<dbReference type="RefSeq" id="WP_012416729.1">
    <property type="nucleotide sequence ID" value="NC_010645.1"/>
</dbReference>
<dbReference type="SMR" id="Q2KV09"/>
<dbReference type="STRING" id="360910.BAV1045"/>
<dbReference type="GeneID" id="92935761"/>
<dbReference type="KEGG" id="bav:BAV1045"/>
<dbReference type="eggNOG" id="COG0649">
    <property type="taxonomic scope" value="Bacteria"/>
</dbReference>
<dbReference type="HOGENOM" id="CLU_015134_1_1_4"/>
<dbReference type="OrthoDB" id="9801496at2"/>
<dbReference type="Proteomes" id="UP000001977">
    <property type="component" value="Chromosome"/>
</dbReference>
<dbReference type="GO" id="GO:0005886">
    <property type="term" value="C:plasma membrane"/>
    <property type="evidence" value="ECO:0007669"/>
    <property type="project" value="UniProtKB-SubCell"/>
</dbReference>
<dbReference type="GO" id="GO:0051287">
    <property type="term" value="F:NAD binding"/>
    <property type="evidence" value="ECO:0007669"/>
    <property type="project" value="InterPro"/>
</dbReference>
<dbReference type="GO" id="GO:0050136">
    <property type="term" value="F:NADH:ubiquinone reductase (non-electrogenic) activity"/>
    <property type="evidence" value="ECO:0007669"/>
    <property type="project" value="UniProtKB-UniRule"/>
</dbReference>
<dbReference type="GO" id="GO:0048038">
    <property type="term" value="F:quinone binding"/>
    <property type="evidence" value="ECO:0007669"/>
    <property type="project" value="UniProtKB-KW"/>
</dbReference>
<dbReference type="FunFam" id="1.10.645.10:FF:000005">
    <property type="entry name" value="NADH-quinone oxidoreductase subunit D"/>
    <property type="match status" value="1"/>
</dbReference>
<dbReference type="Gene3D" id="1.10.645.10">
    <property type="entry name" value="Cytochrome-c3 Hydrogenase, chain B"/>
    <property type="match status" value="1"/>
</dbReference>
<dbReference type="HAMAP" id="MF_01358">
    <property type="entry name" value="NDH1_NuoD"/>
    <property type="match status" value="1"/>
</dbReference>
<dbReference type="InterPro" id="IPR001135">
    <property type="entry name" value="NADH_Q_OxRdtase_suD"/>
</dbReference>
<dbReference type="InterPro" id="IPR014029">
    <property type="entry name" value="NADH_UbQ_OxRdtase_49kDa_CS"/>
</dbReference>
<dbReference type="InterPro" id="IPR022885">
    <property type="entry name" value="NDH1_su_D/H"/>
</dbReference>
<dbReference type="InterPro" id="IPR029014">
    <property type="entry name" value="NiFe-Hase_large"/>
</dbReference>
<dbReference type="NCBIfam" id="TIGR01962">
    <property type="entry name" value="NuoD"/>
    <property type="match status" value="1"/>
</dbReference>
<dbReference type="NCBIfam" id="NF004739">
    <property type="entry name" value="PRK06075.1"/>
    <property type="match status" value="1"/>
</dbReference>
<dbReference type="PANTHER" id="PTHR11993:SF10">
    <property type="entry name" value="NADH DEHYDROGENASE [UBIQUINONE] IRON-SULFUR PROTEIN 2, MITOCHONDRIAL"/>
    <property type="match status" value="1"/>
</dbReference>
<dbReference type="PANTHER" id="PTHR11993">
    <property type="entry name" value="NADH-UBIQUINONE OXIDOREDUCTASE 49 KDA SUBUNIT"/>
    <property type="match status" value="1"/>
</dbReference>
<dbReference type="Pfam" id="PF00346">
    <property type="entry name" value="Complex1_49kDa"/>
    <property type="match status" value="1"/>
</dbReference>
<dbReference type="SUPFAM" id="SSF56762">
    <property type="entry name" value="HydB/Nqo4-like"/>
    <property type="match status" value="1"/>
</dbReference>
<dbReference type="PROSITE" id="PS00535">
    <property type="entry name" value="COMPLEX1_49K"/>
    <property type="match status" value="1"/>
</dbReference>
<proteinExistence type="inferred from homology"/>
<organism>
    <name type="scientific">Bordetella avium (strain 197N)</name>
    <dbReference type="NCBI Taxonomy" id="360910"/>
    <lineage>
        <taxon>Bacteria</taxon>
        <taxon>Pseudomonadati</taxon>
        <taxon>Pseudomonadota</taxon>
        <taxon>Betaproteobacteria</taxon>
        <taxon>Burkholderiales</taxon>
        <taxon>Alcaligenaceae</taxon>
        <taxon>Bordetella</taxon>
    </lineage>
</organism>
<gene>
    <name evidence="1" type="primary">nuoD</name>
    <name type="ordered locus">BAV1045</name>
</gene>
<reference key="1">
    <citation type="journal article" date="2006" name="J. Bacteriol.">
        <title>Comparison of the genome sequence of the poultry pathogen Bordetella avium with those of B. bronchiseptica, B. pertussis, and B. parapertussis reveals extensive diversity in surface structures associated with host interaction.</title>
        <authorList>
            <person name="Sebaihia M."/>
            <person name="Preston A."/>
            <person name="Maskell D.J."/>
            <person name="Kuzmiak H."/>
            <person name="Connell T.D."/>
            <person name="King N.D."/>
            <person name="Orndorff P.E."/>
            <person name="Miyamoto D.M."/>
            <person name="Thomson N.R."/>
            <person name="Harris D."/>
            <person name="Goble A."/>
            <person name="Lord A."/>
            <person name="Murphy L."/>
            <person name="Quail M.A."/>
            <person name="Rutter S."/>
            <person name="Squares R."/>
            <person name="Squares S."/>
            <person name="Woodward J."/>
            <person name="Parkhill J."/>
            <person name="Temple L.M."/>
        </authorList>
    </citation>
    <scope>NUCLEOTIDE SEQUENCE [LARGE SCALE GENOMIC DNA]</scope>
    <source>
        <strain>197N</strain>
    </source>
</reference>